<comment type="disruption phenotype">
    <text evidence="2">Deletion of the ywqH-ywqI-ywqJ-ywqK-nfi operon has no visible phenotype, however it is out-competed by wild-type cells.</text>
</comment>
<gene>
    <name type="primary">ywqI</name>
    <name type="ordered locus">BSU36200</name>
</gene>
<dbReference type="EMBL" id="Z92952">
    <property type="protein sequence ID" value="CAB07447.1"/>
    <property type="molecule type" value="Genomic_DNA"/>
</dbReference>
<dbReference type="EMBL" id="AL009126">
    <property type="protein sequence ID" value="CAB15637.1"/>
    <property type="molecule type" value="Genomic_DNA"/>
</dbReference>
<dbReference type="PIR" id="D70067">
    <property type="entry name" value="D70067"/>
</dbReference>
<dbReference type="RefSeq" id="NP_391501.1">
    <property type="nucleotide sequence ID" value="NC_000964.3"/>
</dbReference>
<dbReference type="RefSeq" id="WP_003221757.1">
    <property type="nucleotide sequence ID" value="NZ_OZ025638.1"/>
</dbReference>
<dbReference type="SMR" id="P96721"/>
<dbReference type="FunCoup" id="P96721">
    <property type="interactions" value="4"/>
</dbReference>
<dbReference type="STRING" id="224308.BSU36200"/>
<dbReference type="PaxDb" id="224308-BSU36200"/>
<dbReference type="EnsemblBacteria" id="CAB15637">
    <property type="protein sequence ID" value="CAB15637"/>
    <property type="gene ID" value="BSU_36200"/>
</dbReference>
<dbReference type="GeneID" id="937912"/>
<dbReference type="KEGG" id="bsu:BSU36200"/>
<dbReference type="PATRIC" id="fig|224308.179.peg.3917"/>
<dbReference type="eggNOG" id="ENOG5033GFQ">
    <property type="taxonomic scope" value="Bacteria"/>
</dbReference>
<dbReference type="InParanoid" id="P96721"/>
<dbReference type="OrthoDB" id="2705701at2"/>
<dbReference type="BioCyc" id="BSUB:BSU36200-MONOMER"/>
<dbReference type="PRO" id="PR:P96721"/>
<dbReference type="Proteomes" id="UP000001570">
    <property type="component" value="Chromosome"/>
</dbReference>
<dbReference type="InterPro" id="IPR046318">
    <property type="entry name" value="DUF5344"/>
</dbReference>
<dbReference type="Pfam" id="PF17279">
    <property type="entry name" value="DUF5344"/>
    <property type="match status" value="1"/>
</dbReference>
<reference key="1">
    <citation type="journal article" date="1997" name="Microbiology">
        <title>The Bacillus subtilis genome from gerBC (311 degrees) to licR (334 degrees).</title>
        <authorList>
            <person name="Presecan E."/>
            <person name="Moszer I."/>
            <person name="Boursier L."/>
            <person name="Cruz Ramos H."/>
            <person name="De La Fuente V."/>
            <person name="Hullo M.-F."/>
            <person name="Lelong C."/>
            <person name="Schleich S."/>
            <person name="Sekowska A."/>
            <person name="Song B.H."/>
            <person name="Villani G."/>
            <person name="Kunst F."/>
            <person name="Danchin A."/>
            <person name="Glaser P."/>
        </authorList>
    </citation>
    <scope>NUCLEOTIDE SEQUENCE [GENOMIC DNA]</scope>
    <source>
        <strain>168</strain>
    </source>
</reference>
<reference key="2">
    <citation type="journal article" date="1997" name="Nature">
        <title>The complete genome sequence of the Gram-positive bacterium Bacillus subtilis.</title>
        <authorList>
            <person name="Kunst F."/>
            <person name="Ogasawara N."/>
            <person name="Moszer I."/>
            <person name="Albertini A.M."/>
            <person name="Alloni G."/>
            <person name="Azevedo V."/>
            <person name="Bertero M.G."/>
            <person name="Bessieres P."/>
            <person name="Bolotin A."/>
            <person name="Borchert S."/>
            <person name="Borriss R."/>
            <person name="Boursier L."/>
            <person name="Brans A."/>
            <person name="Braun M."/>
            <person name="Brignell S.C."/>
            <person name="Bron S."/>
            <person name="Brouillet S."/>
            <person name="Bruschi C.V."/>
            <person name="Caldwell B."/>
            <person name="Capuano V."/>
            <person name="Carter N.M."/>
            <person name="Choi S.-K."/>
            <person name="Codani J.-J."/>
            <person name="Connerton I.F."/>
            <person name="Cummings N.J."/>
            <person name="Daniel R.A."/>
            <person name="Denizot F."/>
            <person name="Devine K.M."/>
            <person name="Duesterhoeft A."/>
            <person name="Ehrlich S.D."/>
            <person name="Emmerson P.T."/>
            <person name="Entian K.-D."/>
            <person name="Errington J."/>
            <person name="Fabret C."/>
            <person name="Ferrari E."/>
            <person name="Foulger D."/>
            <person name="Fritz C."/>
            <person name="Fujita M."/>
            <person name="Fujita Y."/>
            <person name="Fuma S."/>
            <person name="Galizzi A."/>
            <person name="Galleron N."/>
            <person name="Ghim S.-Y."/>
            <person name="Glaser P."/>
            <person name="Goffeau A."/>
            <person name="Golightly E.J."/>
            <person name="Grandi G."/>
            <person name="Guiseppi G."/>
            <person name="Guy B.J."/>
            <person name="Haga K."/>
            <person name="Haiech J."/>
            <person name="Harwood C.R."/>
            <person name="Henaut A."/>
            <person name="Hilbert H."/>
            <person name="Holsappel S."/>
            <person name="Hosono S."/>
            <person name="Hullo M.-F."/>
            <person name="Itaya M."/>
            <person name="Jones L.-M."/>
            <person name="Joris B."/>
            <person name="Karamata D."/>
            <person name="Kasahara Y."/>
            <person name="Klaerr-Blanchard M."/>
            <person name="Klein C."/>
            <person name="Kobayashi Y."/>
            <person name="Koetter P."/>
            <person name="Koningstein G."/>
            <person name="Krogh S."/>
            <person name="Kumano M."/>
            <person name="Kurita K."/>
            <person name="Lapidus A."/>
            <person name="Lardinois S."/>
            <person name="Lauber J."/>
            <person name="Lazarevic V."/>
            <person name="Lee S.-M."/>
            <person name="Levine A."/>
            <person name="Liu H."/>
            <person name="Masuda S."/>
            <person name="Mauel C."/>
            <person name="Medigue C."/>
            <person name="Medina N."/>
            <person name="Mellado R.P."/>
            <person name="Mizuno M."/>
            <person name="Moestl D."/>
            <person name="Nakai S."/>
            <person name="Noback M."/>
            <person name="Noone D."/>
            <person name="O'Reilly M."/>
            <person name="Ogawa K."/>
            <person name="Ogiwara A."/>
            <person name="Oudega B."/>
            <person name="Park S.-H."/>
            <person name="Parro V."/>
            <person name="Pohl T.M."/>
            <person name="Portetelle D."/>
            <person name="Porwollik S."/>
            <person name="Prescott A.M."/>
            <person name="Presecan E."/>
            <person name="Pujic P."/>
            <person name="Purnelle B."/>
            <person name="Rapoport G."/>
            <person name="Rey M."/>
            <person name="Reynolds S."/>
            <person name="Rieger M."/>
            <person name="Rivolta C."/>
            <person name="Rocha E."/>
            <person name="Roche B."/>
            <person name="Rose M."/>
            <person name="Sadaie Y."/>
            <person name="Sato T."/>
            <person name="Scanlan E."/>
            <person name="Schleich S."/>
            <person name="Schroeter R."/>
            <person name="Scoffone F."/>
            <person name="Sekiguchi J."/>
            <person name="Sekowska A."/>
            <person name="Seror S.J."/>
            <person name="Serror P."/>
            <person name="Shin B.-S."/>
            <person name="Soldo B."/>
            <person name="Sorokin A."/>
            <person name="Tacconi E."/>
            <person name="Takagi T."/>
            <person name="Takahashi H."/>
            <person name="Takemaru K."/>
            <person name="Takeuchi M."/>
            <person name="Tamakoshi A."/>
            <person name="Tanaka T."/>
            <person name="Terpstra P."/>
            <person name="Tognoni A."/>
            <person name="Tosato V."/>
            <person name="Uchiyama S."/>
            <person name="Vandenbol M."/>
            <person name="Vannier F."/>
            <person name="Vassarotti A."/>
            <person name="Viari A."/>
            <person name="Wambutt R."/>
            <person name="Wedler E."/>
            <person name="Wedler H."/>
            <person name="Weitzenegger T."/>
            <person name="Winters P."/>
            <person name="Wipat A."/>
            <person name="Yamamoto H."/>
            <person name="Yamane K."/>
            <person name="Yasumoto K."/>
            <person name="Yata K."/>
            <person name="Yoshida K."/>
            <person name="Yoshikawa H.-F."/>
            <person name="Zumstein E."/>
            <person name="Yoshikawa H."/>
            <person name="Danchin A."/>
        </authorList>
    </citation>
    <scope>NUCLEOTIDE SEQUENCE [LARGE SCALE GENOMIC DNA]</scope>
    <source>
        <strain>168</strain>
    </source>
</reference>
<reference key="3">
    <citation type="journal article" date="2021" name="PLoS Genet.">
        <title>Diverse LXG toxin and antitoxin systems specifically mediate intraspecies competition in Bacillus subtilis biofilms.</title>
        <authorList>
            <person name="Kobayashi K."/>
        </authorList>
    </citation>
    <scope>DISRUPTION PHENOTYPE</scope>
    <source>
        <strain>168 / Marburg / ATCC 6051 / DSM 10 / JCM 1465 / NBRC 13719 / NCIMB 3610 / NRRL NRS-744 / VKM B-501</strain>
    </source>
</reference>
<evidence type="ECO:0000255" key="1"/>
<evidence type="ECO:0000269" key="2">
    <source>
    </source>
</evidence>
<sequence>MSEIKLKYDTVIKTLDSVKDALADVSIGAAGSNGKNSLDYTKKYHEREENIKTMLGDYKKAVQKNIEDTKDNVDSLKEQDEAIAVK</sequence>
<proteinExistence type="predicted"/>
<name>YWQI_BACSU</name>
<organism>
    <name type="scientific">Bacillus subtilis (strain 168)</name>
    <dbReference type="NCBI Taxonomy" id="224308"/>
    <lineage>
        <taxon>Bacteria</taxon>
        <taxon>Bacillati</taxon>
        <taxon>Bacillota</taxon>
        <taxon>Bacilli</taxon>
        <taxon>Bacillales</taxon>
        <taxon>Bacillaceae</taxon>
        <taxon>Bacillus</taxon>
    </lineage>
</organism>
<feature type="chain" id="PRO_0000049994" description="Protein YwqI">
    <location>
        <begin position="1"/>
        <end position="86"/>
    </location>
</feature>
<feature type="coiled-coil region" evidence="1">
    <location>
        <begin position="57"/>
        <end position="83"/>
    </location>
</feature>
<accession>P96721</accession>
<protein>
    <recommendedName>
        <fullName>Protein YwqI</fullName>
    </recommendedName>
</protein>
<keyword id="KW-0175">Coiled coil</keyword>
<keyword id="KW-1185">Reference proteome</keyword>